<comment type="function">
    <text evidence="1">Binds 16S rRNA, required for the assembly of 30S particles and may also be responsible for determining the conformation of the 16S rRNA at the A site.</text>
</comment>
<comment type="subunit">
    <text evidence="1">Part of the 30S ribosomal subunit. Contacts proteins S3 and S10.</text>
</comment>
<comment type="similarity">
    <text evidence="1">Belongs to the universal ribosomal protein uS14 family.</text>
</comment>
<organism>
    <name type="scientific">Wigglesworthia glossinidia brevipalpis</name>
    <dbReference type="NCBI Taxonomy" id="36870"/>
    <lineage>
        <taxon>Bacteria</taxon>
        <taxon>Pseudomonadati</taxon>
        <taxon>Pseudomonadota</taxon>
        <taxon>Gammaproteobacteria</taxon>
        <taxon>Enterobacterales</taxon>
        <taxon>Erwiniaceae</taxon>
        <taxon>Wigglesworthia</taxon>
    </lineage>
</organism>
<name>RS14_WIGBR</name>
<sequence length="101" mass="11914">MTRKSIQEREKKRIKLAKTFLKKRKELKKIISDPNIGNDIRWNAVLKLQSLPRDSSLSRQRNRCSQTSRPHAFLRKFGLSRIKLREAAMRGEIPGLRKSSW</sequence>
<gene>
    <name evidence="1" type="primary">rpsN</name>
    <name type="ordered locus">WIGBR5560</name>
</gene>
<proteinExistence type="inferred from homology"/>
<reference key="1">
    <citation type="journal article" date="2002" name="Nat. Genet.">
        <title>Genome sequence of the endocellular obligate symbiont of tsetse flies, Wigglesworthia glossinidia.</title>
        <authorList>
            <person name="Akman L."/>
            <person name="Yamashita A."/>
            <person name="Watanabe H."/>
            <person name="Oshima K."/>
            <person name="Shiba T."/>
            <person name="Hattori M."/>
            <person name="Aksoy S."/>
        </authorList>
    </citation>
    <scope>NUCLEOTIDE SEQUENCE [LARGE SCALE GENOMIC DNA]</scope>
</reference>
<dbReference type="EMBL" id="BA000021">
    <property type="protein sequence ID" value="BAC24702.1"/>
    <property type="molecule type" value="Genomic_DNA"/>
</dbReference>
<dbReference type="SMR" id="Q8D1Z9"/>
<dbReference type="STRING" id="36870.gene:10369065"/>
<dbReference type="KEGG" id="wbr:rpsN"/>
<dbReference type="eggNOG" id="COG0199">
    <property type="taxonomic scope" value="Bacteria"/>
</dbReference>
<dbReference type="HOGENOM" id="CLU_139869_0_1_6"/>
<dbReference type="OrthoDB" id="9810484at2"/>
<dbReference type="Proteomes" id="UP000000562">
    <property type="component" value="Chromosome"/>
</dbReference>
<dbReference type="GO" id="GO:0005737">
    <property type="term" value="C:cytoplasm"/>
    <property type="evidence" value="ECO:0007669"/>
    <property type="project" value="UniProtKB-ARBA"/>
</dbReference>
<dbReference type="GO" id="GO:0015935">
    <property type="term" value="C:small ribosomal subunit"/>
    <property type="evidence" value="ECO:0007669"/>
    <property type="project" value="TreeGrafter"/>
</dbReference>
<dbReference type="GO" id="GO:0019843">
    <property type="term" value="F:rRNA binding"/>
    <property type="evidence" value="ECO:0007669"/>
    <property type="project" value="UniProtKB-UniRule"/>
</dbReference>
<dbReference type="GO" id="GO:0003735">
    <property type="term" value="F:structural constituent of ribosome"/>
    <property type="evidence" value="ECO:0007669"/>
    <property type="project" value="InterPro"/>
</dbReference>
<dbReference type="GO" id="GO:0006412">
    <property type="term" value="P:translation"/>
    <property type="evidence" value="ECO:0007669"/>
    <property type="project" value="UniProtKB-UniRule"/>
</dbReference>
<dbReference type="FunFam" id="1.10.287.1480:FF:000001">
    <property type="entry name" value="30S ribosomal protein S14"/>
    <property type="match status" value="1"/>
</dbReference>
<dbReference type="Gene3D" id="1.10.287.1480">
    <property type="match status" value="1"/>
</dbReference>
<dbReference type="HAMAP" id="MF_00537">
    <property type="entry name" value="Ribosomal_uS14_1"/>
    <property type="match status" value="1"/>
</dbReference>
<dbReference type="InterPro" id="IPR001209">
    <property type="entry name" value="Ribosomal_uS14"/>
</dbReference>
<dbReference type="InterPro" id="IPR023036">
    <property type="entry name" value="Ribosomal_uS14_bac/plastid"/>
</dbReference>
<dbReference type="InterPro" id="IPR018271">
    <property type="entry name" value="Ribosomal_uS14_CS"/>
</dbReference>
<dbReference type="NCBIfam" id="NF006477">
    <property type="entry name" value="PRK08881.1"/>
    <property type="match status" value="1"/>
</dbReference>
<dbReference type="PANTHER" id="PTHR19836">
    <property type="entry name" value="30S RIBOSOMAL PROTEIN S14"/>
    <property type="match status" value="1"/>
</dbReference>
<dbReference type="PANTHER" id="PTHR19836:SF19">
    <property type="entry name" value="SMALL RIBOSOMAL SUBUNIT PROTEIN US14M"/>
    <property type="match status" value="1"/>
</dbReference>
<dbReference type="Pfam" id="PF00253">
    <property type="entry name" value="Ribosomal_S14"/>
    <property type="match status" value="1"/>
</dbReference>
<dbReference type="SUPFAM" id="SSF57716">
    <property type="entry name" value="Glucocorticoid receptor-like (DNA-binding domain)"/>
    <property type="match status" value="1"/>
</dbReference>
<dbReference type="PROSITE" id="PS00527">
    <property type="entry name" value="RIBOSOMAL_S14"/>
    <property type="match status" value="1"/>
</dbReference>
<evidence type="ECO:0000255" key="1">
    <source>
        <dbReference type="HAMAP-Rule" id="MF_00537"/>
    </source>
</evidence>
<evidence type="ECO:0000305" key="2"/>
<protein>
    <recommendedName>
        <fullName evidence="1">Small ribosomal subunit protein uS14</fullName>
    </recommendedName>
    <alternativeName>
        <fullName evidence="2">30S ribosomal protein S14</fullName>
    </alternativeName>
</protein>
<keyword id="KW-1185">Reference proteome</keyword>
<keyword id="KW-0687">Ribonucleoprotein</keyword>
<keyword id="KW-0689">Ribosomal protein</keyword>
<keyword id="KW-0694">RNA-binding</keyword>
<keyword id="KW-0699">rRNA-binding</keyword>
<feature type="chain" id="PRO_1000128635" description="Small ribosomal subunit protein uS14">
    <location>
        <begin position="1"/>
        <end position="101"/>
    </location>
</feature>
<accession>Q8D1Z9</accession>